<feature type="chain" id="PRO_1000086940" description="NADH-quinone oxidoreductase subunit H">
    <location>
        <begin position="1"/>
        <end position="325"/>
    </location>
</feature>
<feature type="transmembrane region" description="Helical" evidence="1">
    <location>
        <begin position="11"/>
        <end position="31"/>
    </location>
</feature>
<feature type="transmembrane region" description="Helical" evidence="1">
    <location>
        <begin position="81"/>
        <end position="101"/>
    </location>
</feature>
<feature type="transmembrane region" description="Helical" evidence="1">
    <location>
        <begin position="114"/>
        <end position="134"/>
    </location>
</feature>
<feature type="transmembrane region" description="Helical" evidence="1">
    <location>
        <begin position="154"/>
        <end position="174"/>
    </location>
</feature>
<feature type="transmembrane region" description="Helical" evidence="1">
    <location>
        <begin position="186"/>
        <end position="206"/>
    </location>
</feature>
<feature type="transmembrane region" description="Helical" evidence="1">
    <location>
        <begin position="237"/>
        <end position="257"/>
    </location>
</feature>
<feature type="transmembrane region" description="Helical" evidence="1">
    <location>
        <begin position="265"/>
        <end position="285"/>
    </location>
</feature>
<feature type="transmembrane region" description="Helical" evidence="1">
    <location>
        <begin position="304"/>
        <end position="324"/>
    </location>
</feature>
<reference key="1">
    <citation type="submission" date="2008-02" db="EMBL/GenBank/DDBJ databases">
        <title>Complete sequence of Escherichia coli C str. ATCC 8739.</title>
        <authorList>
            <person name="Copeland A."/>
            <person name="Lucas S."/>
            <person name="Lapidus A."/>
            <person name="Glavina del Rio T."/>
            <person name="Dalin E."/>
            <person name="Tice H."/>
            <person name="Bruce D."/>
            <person name="Goodwin L."/>
            <person name="Pitluck S."/>
            <person name="Kiss H."/>
            <person name="Brettin T."/>
            <person name="Detter J.C."/>
            <person name="Han C."/>
            <person name="Kuske C.R."/>
            <person name="Schmutz J."/>
            <person name="Larimer F."/>
            <person name="Land M."/>
            <person name="Hauser L."/>
            <person name="Kyrpides N."/>
            <person name="Mikhailova N."/>
            <person name="Ingram L."/>
            <person name="Richardson P."/>
        </authorList>
    </citation>
    <scope>NUCLEOTIDE SEQUENCE [LARGE SCALE GENOMIC DNA]</scope>
    <source>
        <strain>ATCC 8739 / DSM 1576 / NBRC 3972 / NCIMB 8545 / WDCM 00012 / Crooks</strain>
    </source>
</reference>
<dbReference type="EC" id="7.1.1.-" evidence="1"/>
<dbReference type="EMBL" id="CP000946">
    <property type="protein sequence ID" value="ACA77036.1"/>
    <property type="molecule type" value="Genomic_DNA"/>
</dbReference>
<dbReference type="RefSeq" id="WP_000118507.1">
    <property type="nucleotide sequence ID" value="NZ_MTFT01000028.1"/>
</dbReference>
<dbReference type="SMR" id="B1IXR0"/>
<dbReference type="GeneID" id="93774892"/>
<dbReference type="KEGG" id="ecl:EcolC_1370"/>
<dbReference type="HOGENOM" id="CLU_015134_0_1_6"/>
<dbReference type="GO" id="GO:0005886">
    <property type="term" value="C:plasma membrane"/>
    <property type="evidence" value="ECO:0007669"/>
    <property type="project" value="UniProtKB-SubCell"/>
</dbReference>
<dbReference type="GO" id="GO:0003954">
    <property type="term" value="F:NADH dehydrogenase activity"/>
    <property type="evidence" value="ECO:0007669"/>
    <property type="project" value="TreeGrafter"/>
</dbReference>
<dbReference type="GO" id="GO:0016655">
    <property type="term" value="F:oxidoreductase activity, acting on NAD(P)H, quinone or similar compound as acceptor"/>
    <property type="evidence" value="ECO:0007669"/>
    <property type="project" value="UniProtKB-UniRule"/>
</dbReference>
<dbReference type="GO" id="GO:0048038">
    <property type="term" value="F:quinone binding"/>
    <property type="evidence" value="ECO:0007669"/>
    <property type="project" value="UniProtKB-KW"/>
</dbReference>
<dbReference type="GO" id="GO:0009060">
    <property type="term" value="P:aerobic respiration"/>
    <property type="evidence" value="ECO:0007669"/>
    <property type="project" value="TreeGrafter"/>
</dbReference>
<dbReference type="HAMAP" id="MF_01350">
    <property type="entry name" value="NDH1_NuoH"/>
    <property type="match status" value="1"/>
</dbReference>
<dbReference type="InterPro" id="IPR001694">
    <property type="entry name" value="NADH_UbQ_OxRdtase_su1/FPO"/>
</dbReference>
<dbReference type="InterPro" id="IPR018086">
    <property type="entry name" value="NADH_UbQ_OxRdtase_su1_CS"/>
</dbReference>
<dbReference type="NCBIfam" id="NF004740">
    <property type="entry name" value="PRK06076.1-1"/>
    <property type="match status" value="1"/>
</dbReference>
<dbReference type="NCBIfam" id="NF004741">
    <property type="entry name" value="PRK06076.1-2"/>
    <property type="match status" value="1"/>
</dbReference>
<dbReference type="PANTHER" id="PTHR11432">
    <property type="entry name" value="NADH DEHYDROGENASE SUBUNIT 1"/>
    <property type="match status" value="1"/>
</dbReference>
<dbReference type="PANTHER" id="PTHR11432:SF3">
    <property type="entry name" value="NADH-UBIQUINONE OXIDOREDUCTASE CHAIN 1"/>
    <property type="match status" value="1"/>
</dbReference>
<dbReference type="Pfam" id="PF00146">
    <property type="entry name" value="NADHdh"/>
    <property type="match status" value="1"/>
</dbReference>
<dbReference type="PROSITE" id="PS00667">
    <property type="entry name" value="COMPLEX1_ND1_1"/>
    <property type="match status" value="1"/>
</dbReference>
<dbReference type="PROSITE" id="PS00668">
    <property type="entry name" value="COMPLEX1_ND1_2"/>
    <property type="match status" value="1"/>
</dbReference>
<comment type="function">
    <text evidence="1">NDH-1 shuttles electrons from NADH, via FMN and iron-sulfur (Fe-S) centers, to quinones in the respiratory chain. The immediate electron acceptor for the enzyme in this species is believed to be ubiquinone. Couples the redox reaction to proton translocation (for every two electrons transferred, four hydrogen ions are translocated across the cytoplasmic membrane), and thus conserves the redox energy in a proton gradient. This subunit may bind ubiquinone.</text>
</comment>
<comment type="catalytic activity">
    <reaction evidence="1">
        <text>a quinone + NADH + 5 H(+)(in) = a quinol + NAD(+) + 4 H(+)(out)</text>
        <dbReference type="Rhea" id="RHEA:57888"/>
        <dbReference type="ChEBI" id="CHEBI:15378"/>
        <dbReference type="ChEBI" id="CHEBI:24646"/>
        <dbReference type="ChEBI" id="CHEBI:57540"/>
        <dbReference type="ChEBI" id="CHEBI:57945"/>
        <dbReference type="ChEBI" id="CHEBI:132124"/>
    </reaction>
</comment>
<comment type="subunit">
    <text evidence="1">NDH-1 is composed of 13 different subunits. Subunits NuoA, H, J, K, L, M, N constitute the membrane sector of the complex.</text>
</comment>
<comment type="subcellular location">
    <subcellularLocation>
        <location evidence="1">Cell inner membrane</location>
        <topology evidence="1">Multi-pass membrane protein</topology>
    </subcellularLocation>
</comment>
<comment type="similarity">
    <text evidence="1">Belongs to the complex I subunit 1 family.</text>
</comment>
<organism>
    <name type="scientific">Escherichia coli (strain ATCC 8739 / DSM 1576 / NBRC 3972 / NCIMB 8545 / WDCM 00012 / Crooks)</name>
    <dbReference type="NCBI Taxonomy" id="481805"/>
    <lineage>
        <taxon>Bacteria</taxon>
        <taxon>Pseudomonadati</taxon>
        <taxon>Pseudomonadota</taxon>
        <taxon>Gammaproteobacteria</taxon>
        <taxon>Enterobacterales</taxon>
        <taxon>Enterobacteriaceae</taxon>
        <taxon>Escherichia</taxon>
    </lineage>
</organism>
<sequence length="325" mass="36219">MSWISPELIEILLTILKAVVILLVVVTCGAFMSFGERRLLGLFQNRYGPNRVGWGGSLQLVADMIKMFFKEDWIPKFSDRVIFTLAPMIAFTSLLLAFAIVPVSPGWVVADLNIGILFFLMMAGLAVYAVLFAGWSSNNKYSLLGAMRASAQTLSYEVFLGLSLMGVVAQAGSFNMTDIVNSQAHVWNVIPQFFGFITFAIAGVAVCHRHPFDQPEAEQELADGYHIEYSGMKFGLFFVGEYIGIVTISALMVTLFFGGWQGPLLPPFIWFALKTAFFMMMFILIRASLPRPRYDQVMSFGWKICLPLTLINLLVTAAVILWQAQ</sequence>
<protein>
    <recommendedName>
        <fullName evidence="1">NADH-quinone oxidoreductase subunit H</fullName>
        <ecNumber evidence="1">7.1.1.-</ecNumber>
    </recommendedName>
    <alternativeName>
        <fullName evidence="1">NADH dehydrogenase I subunit H</fullName>
    </alternativeName>
    <alternativeName>
        <fullName evidence="1">NDH-1 subunit H</fullName>
    </alternativeName>
</protein>
<evidence type="ECO:0000255" key="1">
    <source>
        <dbReference type="HAMAP-Rule" id="MF_01350"/>
    </source>
</evidence>
<name>NUOH_ECOLC</name>
<keyword id="KW-0997">Cell inner membrane</keyword>
<keyword id="KW-1003">Cell membrane</keyword>
<keyword id="KW-0472">Membrane</keyword>
<keyword id="KW-0520">NAD</keyword>
<keyword id="KW-0874">Quinone</keyword>
<keyword id="KW-1278">Translocase</keyword>
<keyword id="KW-0812">Transmembrane</keyword>
<keyword id="KW-1133">Transmembrane helix</keyword>
<keyword id="KW-0830">Ubiquinone</keyword>
<gene>
    <name evidence="1" type="primary">nuoH</name>
    <name type="ordered locus">EcolC_1370</name>
</gene>
<proteinExistence type="inferred from homology"/>
<accession>B1IXR0</accession>